<feature type="chain" id="PRO_0000383498" description="Probable 4-deoxy-4-formamido-L-arabinose-phosphoundecaprenol deformylase ArnD">
    <location>
        <begin position="1"/>
        <end position="296"/>
    </location>
</feature>
<feature type="domain" description="NodB homology" evidence="1">
    <location>
        <begin position="2"/>
        <end position="260"/>
    </location>
</feature>
<gene>
    <name evidence="1" type="primary">arnD</name>
    <name type="ordered locus">ECSE_2515</name>
</gene>
<sequence length="296" mass="33112">MTKVGLRIDVDTFRGTREGVPRLLEILSKHNIQASIFFSVGPDNMGRHLWRLVKPQFLWKMLRSNAASLYGWDILLAGTAWPGKEIGHANADIIREAAKHHEVGLHAWDHHAWQARSGNWDRQTMIDDIARGLRTLEEIIGQPVTCSAAAGWRADQQVIEAKEAFHLRYNSDCRGAMPFRPLLESGNPGTAQIPVTLPTWDEVIGRDVKAEDFNGWLLNRILRDKGTPVYTIHAEVEGCAYQHNFVDLLKRAAQEGVTFCPLSELLSETLPLGQVVRGNIAGREGWLGCQQIAGSR</sequence>
<comment type="function">
    <text evidence="1">Catalyzes the deformylation of 4-deoxy-4-formamido-L-arabinose-phosphoundecaprenol to 4-amino-4-deoxy-L-arabinose-phosphoundecaprenol. The modified arabinose is attached to lipid A and is required for resistance to polymyxin and cationic antimicrobial peptides.</text>
</comment>
<comment type="catalytic activity">
    <reaction evidence="1">
        <text>4-deoxy-4-formamido-alpha-L-arabinopyranosyl di-trans,octa-cis-undecaprenyl phosphate + H2O = 4-amino-4-deoxy-alpha-L-arabinopyranosyl di-trans,octa-cis-undecaprenyl phosphate + formate</text>
        <dbReference type="Rhea" id="RHEA:27734"/>
        <dbReference type="ChEBI" id="CHEBI:15377"/>
        <dbReference type="ChEBI" id="CHEBI:15740"/>
        <dbReference type="ChEBI" id="CHEBI:58909"/>
        <dbReference type="ChEBI" id="CHEBI:60463"/>
        <dbReference type="EC" id="3.5.1.n3"/>
    </reaction>
</comment>
<comment type="pathway">
    <text evidence="1">Glycolipid biosynthesis; 4-amino-4-deoxy-alpha-L-arabinose undecaprenyl phosphate biosynthesis; 4-amino-4-deoxy-alpha-L-arabinose undecaprenyl phosphate from UDP-4-deoxy-4-formamido-beta-L-arabinose and undecaprenyl phosphate: step 2/2.</text>
</comment>
<comment type="pathway">
    <text evidence="1">Bacterial outer membrane biogenesis; lipopolysaccharide biosynthesis.</text>
</comment>
<comment type="similarity">
    <text evidence="1">Belongs to the polysaccharide deacetylase family. ArnD deformylase subfamily.</text>
</comment>
<proteinExistence type="inferred from homology"/>
<organism>
    <name type="scientific">Escherichia coli (strain SE11)</name>
    <dbReference type="NCBI Taxonomy" id="409438"/>
    <lineage>
        <taxon>Bacteria</taxon>
        <taxon>Pseudomonadati</taxon>
        <taxon>Pseudomonadota</taxon>
        <taxon>Gammaproteobacteria</taxon>
        <taxon>Enterobacterales</taxon>
        <taxon>Enterobacteriaceae</taxon>
        <taxon>Escherichia</taxon>
    </lineage>
</organism>
<evidence type="ECO:0000255" key="1">
    <source>
        <dbReference type="HAMAP-Rule" id="MF_01870"/>
    </source>
</evidence>
<dbReference type="EC" id="3.5.1.n3" evidence="1"/>
<dbReference type="EMBL" id="AP009240">
    <property type="protein sequence ID" value="BAG78039.1"/>
    <property type="molecule type" value="Genomic_DNA"/>
</dbReference>
<dbReference type="RefSeq" id="WP_000169737.1">
    <property type="nucleotide sequence ID" value="NC_011415.1"/>
</dbReference>
<dbReference type="SMR" id="B6I7J9"/>
<dbReference type="GeneID" id="75172387"/>
<dbReference type="KEGG" id="ecy:ECSE_2515"/>
<dbReference type="HOGENOM" id="CLU_084199_0_0_6"/>
<dbReference type="UniPathway" id="UPA00030"/>
<dbReference type="UniPathway" id="UPA00036">
    <property type="reaction ID" value="UER00496"/>
</dbReference>
<dbReference type="Proteomes" id="UP000008199">
    <property type="component" value="Chromosome"/>
</dbReference>
<dbReference type="GO" id="GO:0016020">
    <property type="term" value="C:membrane"/>
    <property type="evidence" value="ECO:0007669"/>
    <property type="project" value="GOC"/>
</dbReference>
<dbReference type="GO" id="GO:0016811">
    <property type="term" value="F:hydrolase activity, acting on carbon-nitrogen (but not peptide) bonds, in linear amides"/>
    <property type="evidence" value="ECO:0007669"/>
    <property type="project" value="UniProtKB-UniRule"/>
</dbReference>
<dbReference type="GO" id="GO:0036108">
    <property type="term" value="P:4-amino-4-deoxy-alpha-L-arabinopyranosyl undecaprenyl phosphate biosynthetic process"/>
    <property type="evidence" value="ECO:0007669"/>
    <property type="project" value="UniProtKB-UniRule"/>
</dbReference>
<dbReference type="GO" id="GO:0009245">
    <property type="term" value="P:lipid A biosynthetic process"/>
    <property type="evidence" value="ECO:0007669"/>
    <property type="project" value="UniProtKB-UniRule"/>
</dbReference>
<dbReference type="GO" id="GO:0009103">
    <property type="term" value="P:lipopolysaccharide biosynthetic process"/>
    <property type="evidence" value="ECO:0007669"/>
    <property type="project" value="UniProtKB-UniRule"/>
</dbReference>
<dbReference type="GO" id="GO:0046677">
    <property type="term" value="P:response to antibiotic"/>
    <property type="evidence" value="ECO:0007669"/>
    <property type="project" value="UniProtKB-KW"/>
</dbReference>
<dbReference type="CDD" id="cd10939">
    <property type="entry name" value="CE4_ArnD"/>
    <property type="match status" value="1"/>
</dbReference>
<dbReference type="Gene3D" id="3.20.20.370">
    <property type="entry name" value="Glycoside hydrolase/deacetylase"/>
    <property type="match status" value="1"/>
</dbReference>
<dbReference type="HAMAP" id="MF_01870">
    <property type="entry name" value="ArnD"/>
    <property type="match status" value="1"/>
</dbReference>
<dbReference type="InterPro" id="IPR023557">
    <property type="entry name" value="ArnD"/>
</dbReference>
<dbReference type="InterPro" id="IPR011330">
    <property type="entry name" value="Glyco_hydro/deAcase_b/a-brl"/>
</dbReference>
<dbReference type="InterPro" id="IPR002509">
    <property type="entry name" value="NODB_dom"/>
</dbReference>
<dbReference type="InterPro" id="IPR050248">
    <property type="entry name" value="Polysacc_deacetylase_ArnD"/>
</dbReference>
<dbReference type="NCBIfam" id="NF011923">
    <property type="entry name" value="PRK15394.1"/>
    <property type="match status" value="1"/>
</dbReference>
<dbReference type="PANTHER" id="PTHR10587:SF137">
    <property type="entry name" value="4-DEOXY-4-FORMAMIDO-L-ARABINOSE-PHOSPHOUNDECAPRENOL DEFORMYLASE ARND-RELATED"/>
    <property type="match status" value="1"/>
</dbReference>
<dbReference type="PANTHER" id="PTHR10587">
    <property type="entry name" value="GLYCOSYL TRANSFERASE-RELATED"/>
    <property type="match status" value="1"/>
</dbReference>
<dbReference type="Pfam" id="PF01522">
    <property type="entry name" value="Polysacc_deac_1"/>
    <property type="match status" value="1"/>
</dbReference>
<dbReference type="SUPFAM" id="SSF88713">
    <property type="entry name" value="Glycoside hydrolase/deacetylase"/>
    <property type="match status" value="1"/>
</dbReference>
<dbReference type="PROSITE" id="PS51677">
    <property type="entry name" value="NODB"/>
    <property type="match status" value="1"/>
</dbReference>
<reference key="1">
    <citation type="journal article" date="2008" name="DNA Res.">
        <title>Complete genome sequence and comparative analysis of the wild-type commensal Escherichia coli strain SE11 isolated from a healthy adult.</title>
        <authorList>
            <person name="Oshima K."/>
            <person name="Toh H."/>
            <person name="Ogura Y."/>
            <person name="Sasamoto H."/>
            <person name="Morita H."/>
            <person name="Park S.-H."/>
            <person name="Ooka T."/>
            <person name="Iyoda S."/>
            <person name="Taylor T.D."/>
            <person name="Hayashi T."/>
            <person name="Itoh K."/>
            <person name="Hattori M."/>
        </authorList>
    </citation>
    <scope>NUCLEOTIDE SEQUENCE [LARGE SCALE GENOMIC DNA]</scope>
    <source>
        <strain>SE11</strain>
    </source>
</reference>
<name>ARND_ECOSE</name>
<accession>B6I7J9</accession>
<protein>
    <recommendedName>
        <fullName evidence="1">Probable 4-deoxy-4-formamido-L-arabinose-phosphoundecaprenol deformylase ArnD</fullName>
        <ecNumber evidence="1">3.5.1.n3</ecNumber>
    </recommendedName>
</protein>
<keyword id="KW-0046">Antibiotic resistance</keyword>
<keyword id="KW-0378">Hydrolase</keyword>
<keyword id="KW-0441">Lipid A biosynthesis</keyword>
<keyword id="KW-0444">Lipid biosynthesis</keyword>
<keyword id="KW-0443">Lipid metabolism</keyword>
<keyword id="KW-0448">Lipopolysaccharide biosynthesis</keyword>